<name>CUTC_YERPP</name>
<evidence type="ECO:0000255" key="1">
    <source>
        <dbReference type="HAMAP-Rule" id="MF_00795"/>
    </source>
</evidence>
<keyword id="KW-0963">Cytoplasm</keyword>
<comment type="subcellular location">
    <subcellularLocation>
        <location evidence="1">Cytoplasm</location>
    </subcellularLocation>
</comment>
<comment type="similarity">
    <text evidence="1">Belongs to the CutC family.</text>
</comment>
<comment type="caution">
    <text evidence="1">Once thought to be involved in copper homeostasis, experiments in E.coli have shown this is not the case.</text>
</comment>
<dbReference type="EMBL" id="CP000668">
    <property type="protein sequence ID" value="ABP39472.1"/>
    <property type="molecule type" value="Genomic_DNA"/>
</dbReference>
<dbReference type="RefSeq" id="WP_002211209.1">
    <property type="nucleotide sequence ID" value="NZ_CP009715.1"/>
</dbReference>
<dbReference type="SMR" id="A4TJL0"/>
<dbReference type="GeneID" id="57976613"/>
<dbReference type="KEGG" id="ypp:YPDSF_1074"/>
<dbReference type="PATRIC" id="fig|386656.14.peg.2759"/>
<dbReference type="GO" id="GO:0005737">
    <property type="term" value="C:cytoplasm"/>
    <property type="evidence" value="ECO:0007669"/>
    <property type="project" value="UniProtKB-SubCell"/>
</dbReference>
<dbReference type="GO" id="GO:0005507">
    <property type="term" value="F:copper ion binding"/>
    <property type="evidence" value="ECO:0007669"/>
    <property type="project" value="TreeGrafter"/>
</dbReference>
<dbReference type="FunFam" id="3.20.20.380:FF:000001">
    <property type="entry name" value="Copper homeostasis protein CutC"/>
    <property type="match status" value="1"/>
</dbReference>
<dbReference type="Gene3D" id="3.20.20.380">
    <property type="entry name" value="Copper homeostasis (CutC) domain"/>
    <property type="match status" value="1"/>
</dbReference>
<dbReference type="HAMAP" id="MF_00795">
    <property type="entry name" value="CutC"/>
    <property type="match status" value="1"/>
</dbReference>
<dbReference type="InterPro" id="IPR005627">
    <property type="entry name" value="CutC-like"/>
</dbReference>
<dbReference type="InterPro" id="IPR036822">
    <property type="entry name" value="CutC-like_dom_sf"/>
</dbReference>
<dbReference type="NCBIfam" id="NF008603">
    <property type="entry name" value="PRK11572.1"/>
    <property type="match status" value="1"/>
</dbReference>
<dbReference type="PANTHER" id="PTHR12598">
    <property type="entry name" value="COPPER HOMEOSTASIS PROTEIN CUTC"/>
    <property type="match status" value="1"/>
</dbReference>
<dbReference type="PANTHER" id="PTHR12598:SF0">
    <property type="entry name" value="COPPER HOMEOSTASIS PROTEIN CUTC HOMOLOG"/>
    <property type="match status" value="1"/>
</dbReference>
<dbReference type="Pfam" id="PF03932">
    <property type="entry name" value="CutC"/>
    <property type="match status" value="1"/>
</dbReference>
<dbReference type="SUPFAM" id="SSF110395">
    <property type="entry name" value="CutC-like"/>
    <property type="match status" value="1"/>
</dbReference>
<protein>
    <recommendedName>
        <fullName evidence="1">PF03932 family protein CutC</fullName>
    </recommendedName>
</protein>
<organism>
    <name type="scientific">Yersinia pestis (strain Pestoides F)</name>
    <dbReference type="NCBI Taxonomy" id="386656"/>
    <lineage>
        <taxon>Bacteria</taxon>
        <taxon>Pseudomonadati</taxon>
        <taxon>Pseudomonadota</taxon>
        <taxon>Gammaproteobacteria</taxon>
        <taxon>Enterobacterales</taxon>
        <taxon>Yersiniaceae</taxon>
        <taxon>Yersinia</taxon>
    </lineage>
</organism>
<reference key="1">
    <citation type="submission" date="2007-02" db="EMBL/GenBank/DDBJ databases">
        <title>Complete sequence of chromosome of Yersinia pestis Pestoides F.</title>
        <authorList>
            <consortium name="US DOE Joint Genome Institute"/>
            <person name="Copeland A."/>
            <person name="Lucas S."/>
            <person name="Lapidus A."/>
            <person name="Barry K."/>
            <person name="Detter J.C."/>
            <person name="Glavina del Rio T."/>
            <person name="Hammon N."/>
            <person name="Israni S."/>
            <person name="Dalin E."/>
            <person name="Tice H."/>
            <person name="Pitluck S."/>
            <person name="Di Bartolo G."/>
            <person name="Chain P."/>
            <person name="Malfatti S."/>
            <person name="Shin M."/>
            <person name="Vergez L."/>
            <person name="Schmutz J."/>
            <person name="Larimer F."/>
            <person name="Land M."/>
            <person name="Hauser L."/>
            <person name="Worsham P."/>
            <person name="Chu M."/>
            <person name="Bearden S."/>
            <person name="Garcia E."/>
            <person name="Richardson P."/>
        </authorList>
    </citation>
    <scope>NUCLEOTIDE SEQUENCE [LARGE SCALE GENOMIC DNA]</scope>
    <source>
        <strain>Pestoides F</strain>
    </source>
</reference>
<accession>A4TJL0</accession>
<feature type="chain" id="PRO_1000046952" description="PF03932 family protein CutC">
    <location>
        <begin position="1"/>
        <end position="254"/>
    </location>
</feature>
<gene>
    <name evidence="1" type="primary">cutC</name>
    <name type="ordered locus">YPDSF_1074</name>
</gene>
<sequence>MTKLEVCCYSVDCAQIAEKAGADRVELCCGQSEGGVTPSVGALMQARETVTIPVHPIVRPRGGDFCYSSNDFTIMKNDIARIRDLGFAGVVVGVLDTDGHIDMPRMREIMSVSGSLAVTFHRAFDMCQNPMIALKQLAELNVARILTSGQQQNAELGLALLKDLVAATKDQGPIIMAGAGVRLTNMQKFIDAGIRELHSSAGRTVPSTMRYRKAGVTMCADSDVDEFSHYCVDGEVVEAMKSLLVMGSPLAKHT</sequence>
<proteinExistence type="inferred from homology"/>